<accession>C4ZU91</accession>
<dbReference type="EMBL" id="CP001396">
    <property type="protein sequence ID" value="ACR62341.1"/>
    <property type="molecule type" value="Genomic_DNA"/>
</dbReference>
<dbReference type="RefSeq" id="WP_000921621.1">
    <property type="nucleotide sequence ID" value="NC_012759.1"/>
</dbReference>
<dbReference type="SMR" id="C4ZU91"/>
<dbReference type="KEGG" id="ebw:BWG_2022"/>
<dbReference type="HOGENOM" id="CLU_030805_9_1_6"/>
<dbReference type="CDD" id="cd00885">
    <property type="entry name" value="cinA"/>
    <property type="match status" value="1"/>
</dbReference>
<dbReference type="Gene3D" id="3.40.980.10">
    <property type="entry name" value="MoaB/Mog-like domain"/>
    <property type="match status" value="1"/>
</dbReference>
<dbReference type="HAMAP" id="MF_00226_B">
    <property type="entry name" value="CinA_B"/>
    <property type="match status" value="1"/>
</dbReference>
<dbReference type="InterPro" id="IPR050101">
    <property type="entry name" value="CinA"/>
</dbReference>
<dbReference type="InterPro" id="IPR036653">
    <property type="entry name" value="CinA-like_C"/>
</dbReference>
<dbReference type="InterPro" id="IPR008135">
    <property type="entry name" value="Competence-induced_CinA"/>
</dbReference>
<dbReference type="InterPro" id="IPR036425">
    <property type="entry name" value="MoaB/Mog-like_dom_sf"/>
</dbReference>
<dbReference type="InterPro" id="IPR001453">
    <property type="entry name" value="MoaB/Mog_dom"/>
</dbReference>
<dbReference type="NCBIfam" id="TIGR00200">
    <property type="entry name" value="cinA_nterm"/>
    <property type="match status" value="1"/>
</dbReference>
<dbReference type="NCBIfam" id="TIGR00177">
    <property type="entry name" value="molyb_syn"/>
    <property type="match status" value="1"/>
</dbReference>
<dbReference type="NCBIfam" id="NF002978">
    <property type="entry name" value="PRK03673.1"/>
    <property type="match status" value="1"/>
</dbReference>
<dbReference type="PANTHER" id="PTHR13939">
    <property type="entry name" value="NICOTINAMIDE-NUCLEOTIDE AMIDOHYDROLASE PNCC"/>
    <property type="match status" value="1"/>
</dbReference>
<dbReference type="PANTHER" id="PTHR13939:SF0">
    <property type="entry name" value="NMN AMIDOHYDROLASE-LIKE PROTEIN YFAY"/>
    <property type="match status" value="1"/>
</dbReference>
<dbReference type="Pfam" id="PF00994">
    <property type="entry name" value="MoCF_biosynth"/>
    <property type="match status" value="1"/>
</dbReference>
<dbReference type="PIRSF" id="PIRSF006728">
    <property type="entry name" value="CinA"/>
    <property type="match status" value="1"/>
</dbReference>
<dbReference type="SMART" id="SM00852">
    <property type="entry name" value="MoCF_biosynth"/>
    <property type="match status" value="1"/>
</dbReference>
<dbReference type="SUPFAM" id="SSF142433">
    <property type="entry name" value="CinA-like"/>
    <property type="match status" value="1"/>
</dbReference>
<dbReference type="SUPFAM" id="SSF53218">
    <property type="entry name" value="Molybdenum cofactor biosynthesis proteins"/>
    <property type="match status" value="1"/>
</dbReference>
<organism>
    <name type="scientific">Escherichia coli (strain K12 / MC4100 / BW2952)</name>
    <dbReference type="NCBI Taxonomy" id="595496"/>
    <lineage>
        <taxon>Bacteria</taxon>
        <taxon>Pseudomonadati</taxon>
        <taxon>Pseudomonadota</taxon>
        <taxon>Gammaproteobacteria</taxon>
        <taxon>Enterobacterales</taxon>
        <taxon>Enterobacteriaceae</taxon>
        <taxon>Escherichia</taxon>
    </lineage>
</organism>
<feature type="chain" id="PRO_1000204324" description="CinA-like protein">
    <location>
        <begin position="1"/>
        <end position="400"/>
    </location>
</feature>
<comment type="similarity">
    <text evidence="1">Belongs to the CinA family.</text>
</comment>
<proteinExistence type="inferred from homology"/>
<gene>
    <name type="ordered locus">BWG_2022</name>
</gene>
<name>CINAL_ECOBW</name>
<sequence>MLKVEMLSTGDEVLHGQIVDTNAAWLADFFFHQGLPLSRRNTVGDNLDDLVTILRERSQHADVLIVNGGLGPTSDDLSALAAATAKGEGLVLHEAWLKEMERYFHERGRVMAPSNRKQAELPASAEFINNPVGTACGFAVQLNRCLMFFTPGVPSEFKVMVEHEILPRLRERFSLPQPPVCLRLTTFGRSESDLAQSLDTLQLPPGVTMGYRSSMPIIELKLTGPASEQQAMEKLWLDVKRVAGQSVIFEGTEGLPAQISRELQNRQFSLTLSEQFTGGLLALQLSRAGAPLLACEVVPSQEETLAQTAHWITERRANHFAGLALAVSGFENEHLNFALATPDGTFALRVRFSTTRYSLAIRQEVCAMMALNMLRRWLNGQDIASEHGWIEVVESMTLSV</sequence>
<protein>
    <recommendedName>
        <fullName evidence="1">CinA-like protein</fullName>
    </recommendedName>
</protein>
<reference key="1">
    <citation type="journal article" date="2009" name="J. Bacteriol.">
        <title>Genomic sequencing reveals regulatory mutations and recombinational events in the widely used MC4100 lineage of Escherichia coli K-12.</title>
        <authorList>
            <person name="Ferenci T."/>
            <person name="Zhou Z."/>
            <person name="Betteridge T."/>
            <person name="Ren Y."/>
            <person name="Liu Y."/>
            <person name="Feng L."/>
            <person name="Reeves P.R."/>
            <person name="Wang L."/>
        </authorList>
    </citation>
    <scope>NUCLEOTIDE SEQUENCE [LARGE SCALE GENOMIC DNA]</scope>
    <source>
        <strain>K12 / MC4100 / BW2952</strain>
    </source>
</reference>
<evidence type="ECO:0000255" key="1">
    <source>
        <dbReference type="HAMAP-Rule" id="MF_00226"/>
    </source>
</evidence>